<proteinExistence type="evidence at protein level"/>
<keyword id="KW-1003">Cell membrane</keyword>
<keyword id="KW-0966">Cell projection</keyword>
<keyword id="KW-0325">Glycoprotein</keyword>
<keyword id="KW-0407">Ion channel</keyword>
<keyword id="KW-0406">Ion transport</keyword>
<keyword id="KW-0472">Membrane</keyword>
<keyword id="KW-0597">Phosphoprotein</keyword>
<keyword id="KW-0630">Potassium</keyword>
<keyword id="KW-0631">Potassium channel</keyword>
<keyword id="KW-0633">Potassium transport</keyword>
<keyword id="KW-1185">Reference proteome</keyword>
<keyword id="KW-0812">Transmembrane</keyword>
<keyword id="KW-1133">Transmembrane helix</keyword>
<keyword id="KW-0813">Transport</keyword>
<keyword id="KW-0851">Voltage-gated channel</keyword>
<protein>
    <recommendedName>
        <fullName evidence="9">Potassium voltage-gated channel subfamily B member 2</fullName>
    </recommendedName>
    <alternativeName>
        <fullName>Voltage-gated potassium channel subunit Kv2.2</fullName>
    </alternativeName>
</protein>
<dbReference type="EMBL" id="AC126049">
    <property type="status" value="NOT_ANNOTATED_CDS"/>
    <property type="molecule type" value="Genomic_DNA"/>
</dbReference>
<dbReference type="EMBL" id="AC132603">
    <property type="status" value="NOT_ANNOTATED_CDS"/>
    <property type="molecule type" value="Genomic_DNA"/>
</dbReference>
<dbReference type="EMBL" id="AC137555">
    <property type="status" value="NOT_ANNOTATED_CDS"/>
    <property type="molecule type" value="Genomic_DNA"/>
</dbReference>
<dbReference type="EMBL" id="AC166075">
    <property type="status" value="NOT_ANNOTATED_CDS"/>
    <property type="molecule type" value="Genomic_DNA"/>
</dbReference>
<dbReference type="EMBL" id="BC146609">
    <property type="protein sequence ID" value="AAI46610.1"/>
    <property type="molecule type" value="mRNA"/>
</dbReference>
<dbReference type="CCDS" id="CCDS48222.1"/>
<dbReference type="RefSeq" id="NP_001091998.1">
    <property type="nucleotide sequence ID" value="NM_001098528.3"/>
</dbReference>
<dbReference type="RefSeq" id="XP_006495658.1">
    <property type="nucleotide sequence ID" value="XM_006495595.3"/>
</dbReference>
<dbReference type="SMR" id="A6H8H5"/>
<dbReference type="BioGRID" id="221119">
    <property type="interactions" value="14"/>
</dbReference>
<dbReference type="CORUM" id="A6H8H5"/>
<dbReference type="FunCoup" id="A6H8H5">
    <property type="interactions" value="135"/>
</dbReference>
<dbReference type="IntAct" id="A6H8H5">
    <property type="interactions" value="1"/>
</dbReference>
<dbReference type="STRING" id="10090.ENSMUSP00000126656"/>
<dbReference type="GlyCosmos" id="A6H8H5">
    <property type="glycosylation" value="1 site, No reported glycans"/>
</dbReference>
<dbReference type="GlyGen" id="A6H8H5">
    <property type="glycosylation" value="1 site"/>
</dbReference>
<dbReference type="iPTMnet" id="A6H8H5"/>
<dbReference type="PhosphoSitePlus" id="A6H8H5"/>
<dbReference type="SwissPalm" id="A6H8H5"/>
<dbReference type="PaxDb" id="10090-ENSMUSP00000126656"/>
<dbReference type="PeptideAtlas" id="A6H8H5"/>
<dbReference type="ProteomicsDB" id="269256"/>
<dbReference type="ABCD" id="A6H8H5">
    <property type="antibodies" value="3 sequenced antibodies"/>
</dbReference>
<dbReference type="DNASU" id="98741"/>
<dbReference type="Ensembl" id="ENSMUST00000170146.3">
    <property type="protein sequence ID" value="ENSMUSP00000126656.3"/>
    <property type="gene ID" value="ENSMUSG00000092083.5"/>
</dbReference>
<dbReference type="Ensembl" id="ENSMUST00000175681.3">
    <property type="protein sequence ID" value="ENSMUSP00000135382.2"/>
    <property type="gene ID" value="ENSMUSG00000092083.5"/>
</dbReference>
<dbReference type="GeneID" id="98741"/>
<dbReference type="KEGG" id="mmu:98741"/>
<dbReference type="UCSC" id="uc007aje.1">
    <property type="organism name" value="mouse"/>
</dbReference>
<dbReference type="AGR" id="MGI:99632"/>
<dbReference type="CTD" id="9312"/>
<dbReference type="MGI" id="MGI:99632">
    <property type="gene designation" value="Kcnb2"/>
</dbReference>
<dbReference type="VEuPathDB" id="HostDB:ENSMUSG00000092083"/>
<dbReference type="eggNOG" id="KOG3713">
    <property type="taxonomic scope" value="Eukaryota"/>
</dbReference>
<dbReference type="GeneTree" id="ENSGT00940000154899"/>
<dbReference type="HOGENOM" id="CLU_011722_2_0_1"/>
<dbReference type="InParanoid" id="A6H8H5"/>
<dbReference type="OMA" id="AHENHIG"/>
<dbReference type="OrthoDB" id="296522at2759"/>
<dbReference type="PhylomeDB" id="A6H8H5"/>
<dbReference type="TreeFam" id="TF313103"/>
<dbReference type="Reactome" id="R-MMU-1296072">
    <property type="pathway name" value="Voltage gated Potassium channels"/>
</dbReference>
<dbReference type="BioGRID-ORCS" id="98741">
    <property type="hits" value="4 hits in 77 CRISPR screens"/>
</dbReference>
<dbReference type="ChiTaRS" id="Kcnb2">
    <property type="organism name" value="mouse"/>
</dbReference>
<dbReference type="PRO" id="PR:A6H8H5"/>
<dbReference type="Proteomes" id="UP000000589">
    <property type="component" value="Chromosome 1"/>
</dbReference>
<dbReference type="RNAct" id="A6H8H5">
    <property type="molecule type" value="protein"/>
</dbReference>
<dbReference type="Bgee" id="ENSMUSG00000092083">
    <property type="expression patterns" value="Expressed in olfactory bulb and 56 other cell types or tissues"/>
</dbReference>
<dbReference type="GO" id="GO:0030425">
    <property type="term" value="C:dendrite"/>
    <property type="evidence" value="ECO:0000250"/>
    <property type="project" value="UniProtKB"/>
</dbReference>
<dbReference type="GO" id="GO:0032809">
    <property type="term" value="C:neuronal cell body membrane"/>
    <property type="evidence" value="ECO:0000250"/>
    <property type="project" value="UniProtKB"/>
</dbReference>
<dbReference type="GO" id="GO:0043204">
    <property type="term" value="C:perikaryon"/>
    <property type="evidence" value="ECO:0007669"/>
    <property type="project" value="UniProtKB-SubCell"/>
</dbReference>
<dbReference type="GO" id="GO:0005886">
    <property type="term" value="C:plasma membrane"/>
    <property type="evidence" value="ECO:0000250"/>
    <property type="project" value="UniProtKB"/>
</dbReference>
<dbReference type="GO" id="GO:0008076">
    <property type="term" value="C:voltage-gated potassium channel complex"/>
    <property type="evidence" value="ECO:0000250"/>
    <property type="project" value="UniProtKB"/>
</dbReference>
<dbReference type="GO" id="GO:0005251">
    <property type="term" value="F:delayed rectifier potassium channel activity"/>
    <property type="evidence" value="ECO:0000250"/>
    <property type="project" value="UniProtKB"/>
</dbReference>
<dbReference type="GO" id="GO:0046982">
    <property type="term" value="F:protein heterodimerization activity"/>
    <property type="evidence" value="ECO:0000250"/>
    <property type="project" value="UniProtKB"/>
</dbReference>
<dbReference type="GO" id="GO:0071805">
    <property type="term" value="P:potassium ion transmembrane transport"/>
    <property type="evidence" value="ECO:0000250"/>
    <property type="project" value="UniProtKB"/>
</dbReference>
<dbReference type="GO" id="GO:0006813">
    <property type="term" value="P:potassium ion transport"/>
    <property type="evidence" value="ECO:0000250"/>
    <property type="project" value="UniProtKB"/>
</dbReference>
<dbReference type="GO" id="GO:0051260">
    <property type="term" value="P:protein homooligomerization"/>
    <property type="evidence" value="ECO:0007669"/>
    <property type="project" value="InterPro"/>
</dbReference>
<dbReference type="GO" id="GO:0072659">
    <property type="term" value="P:protein localization to plasma membrane"/>
    <property type="evidence" value="ECO:0000250"/>
    <property type="project" value="UniProtKB"/>
</dbReference>
<dbReference type="CDD" id="cd18412">
    <property type="entry name" value="BTB_POZ_KCNB2"/>
    <property type="match status" value="1"/>
</dbReference>
<dbReference type="FunFam" id="1.10.287.70:FF:000034">
    <property type="entry name" value="Potassium voltage-gated channel subfamily B member"/>
    <property type="match status" value="1"/>
</dbReference>
<dbReference type="FunFam" id="1.20.120.350:FF:000018">
    <property type="entry name" value="Potassium voltage-gated channel subfamily B member"/>
    <property type="match status" value="1"/>
</dbReference>
<dbReference type="FunFam" id="3.30.710.10:FF:000010">
    <property type="entry name" value="Potassium voltage-gated channel subfamily B member"/>
    <property type="match status" value="1"/>
</dbReference>
<dbReference type="Gene3D" id="1.10.287.70">
    <property type="match status" value="1"/>
</dbReference>
<dbReference type="Gene3D" id="3.30.710.10">
    <property type="entry name" value="Potassium Channel Kv1.1, Chain A"/>
    <property type="match status" value="1"/>
</dbReference>
<dbReference type="Gene3D" id="1.20.120.350">
    <property type="entry name" value="Voltage-gated potassium channels. Chain C"/>
    <property type="match status" value="1"/>
</dbReference>
<dbReference type="InterPro" id="IPR000210">
    <property type="entry name" value="BTB/POZ_dom"/>
</dbReference>
<dbReference type="InterPro" id="IPR005821">
    <property type="entry name" value="Ion_trans_dom"/>
</dbReference>
<dbReference type="InterPro" id="IPR003968">
    <property type="entry name" value="K_chnl_volt-dep_Kv"/>
</dbReference>
<dbReference type="InterPro" id="IPR003973">
    <property type="entry name" value="K_chnl_volt-dep_Kv2"/>
</dbReference>
<dbReference type="InterPro" id="IPR005826">
    <property type="entry name" value="K_chnl_volt-dep_Kv2.2"/>
</dbReference>
<dbReference type="InterPro" id="IPR011333">
    <property type="entry name" value="SKP1/BTB/POZ_sf"/>
</dbReference>
<dbReference type="InterPro" id="IPR003131">
    <property type="entry name" value="T1-type_BTB"/>
</dbReference>
<dbReference type="InterPro" id="IPR028325">
    <property type="entry name" value="VG_K_chnl"/>
</dbReference>
<dbReference type="InterPro" id="IPR027359">
    <property type="entry name" value="Volt_channel_dom_sf"/>
</dbReference>
<dbReference type="PANTHER" id="PTHR11537:SF134">
    <property type="entry name" value="POTASSIUM VOLTAGE-GATED CHANNEL SUBFAMILY B MEMBER 2"/>
    <property type="match status" value="1"/>
</dbReference>
<dbReference type="PANTHER" id="PTHR11537">
    <property type="entry name" value="VOLTAGE-GATED POTASSIUM CHANNEL"/>
    <property type="match status" value="1"/>
</dbReference>
<dbReference type="Pfam" id="PF02214">
    <property type="entry name" value="BTB_2"/>
    <property type="match status" value="1"/>
</dbReference>
<dbReference type="Pfam" id="PF00520">
    <property type="entry name" value="Ion_trans"/>
    <property type="match status" value="1"/>
</dbReference>
<dbReference type="Pfam" id="PF03521">
    <property type="entry name" value="Kv2channel"/>
    <property type="match status" value="1"/>
</dbReference>
<dbReference type="PRINTS" id="PR00169">
    <property type="entry name" value="KCHANNEL"/>
</dbReference>
<dbReference type="PRINTS" id="PR01515">
    <property type="entry name" value="KV22CHANNEL"/>
</dbReference>
<dbReference type="PRINTS" id="PR01491">
    <property type="entry name" value="KVCHANNEL"/>
</dbReference>
<dbReference type="PRINTS" id="PR01495">
    <property type="entry name" value="SHABCHANNEL"/>
</dbReference>
<dbReference type="SMART" id="SM00225">
    <property type="entry name" value="BTB"/>
    <property type="match status" value="1"/>
</dbReference>
<dbReference type="SUPFAM" id="SSF54695">
    <property type="entry name" value="POZ domain"/>
    <property type="match status" value="1"/>
</dbReference>
<dbReference type="SUPFAM" id="SSF81324">
    <property type="entry name" value="Voltage-gated potassium channels"/>
    <property type="match status" value="1"/>
</dbReference>
<gene>
    <name evidence="9" type="primary">Kcnb2</name>
</gene>
<name>KCNB2_MOUSE</name>
<reference key="1">
    <citation type="journal article" date="2009" name="PLoS Biol.">
        <title>Lineage-specific biology revealed by a finished genome assembly of the mouse.</title>
        <authorList>
            <person name="Church D.M."/>
            <person name="Goodstadt L."/>
            <person name="Hillier L.W."/>
            <person name="Zody M.C."/>
            <person name="Goldstein S."/>
            <person name="She X."/>
            <person name="Bult C.J."/>
            <person name="Agarwala R."/>
            <person name="Cherry J.L."/>
            <person name="DiCuccio M."/>
            <person name="Hlavina W."/>
            <person name="Kapustin Y."/>
            <person name="Meric P."/>
            <person name="Maglott D."/>
            <person name="Birtle Z."/>
            <person name="Marques A.C."/>
            <person name="Graves T."/>
            <person name="Zhou S."/>
            <person name="Teague B."/>
            <person name="Potamousis K."/>
            <person name="Churas C."/>
            <person name="Place M."/>
            <person name="Herschleb J."/>
            <person name="Runnheim R."/>
            <person name="Forrest D."/>
            <person name="Amos-Landgraf J."/>
            <person name="Schwartz D.C."/>
            <person name="Cheng Z."/>
            <person name="Lindblad-Toh K."/>
            <person name="Eichler E.E."/>
            <person name="Ponting C.P."/>
        </authorList>
    </citation>
    <scope>NUCLEOTIDE SEQUENCE [LARGE SCALE GENOMIC DNA]</scope>
    <source>
        <strain>C57BL/6J</strain>
    </source>
</reference>
<reference key="2">
    <citation type="journal article" date="2004" name="Genome Res.">
        <title>The status, quality, and expansion of the NIH full-length cDNA project: the Mammalian Gene Collection (MGC).</title>
        <authorList>
            <consortium name="The MGC Project Team"/>
        </authorList>
    </citation>
    <scope>NUCLEOTIDE SEQUENCE [LARGE SCALE MRNA]</scope>
</reference>
<reference key="3">
    <citation type="journal article" date="1999" name="Ann. N. Y. Acad. Sci.">
        <title>Molecular diversity of K+ channels.</title>
        <authorList>
            <person name="Coetzee W.A."/>
            <person name="Amarillo Y."/>
            <person name="Chiu J."/>
            <person name="Chow A."/>
            <person name="Lau D."/>
            <person name="McCormack T."/>
            <person name="Moreno H."/>
            <person name="Nadal M.S."/>
            <person name="Ozaita A."/>
            <person name="Pountney D."/>
            <person name="Saganich M."/>
            <person name="Vega-Saenz de Miera E."/>
            <person name="Rudy B."/>
        </authorList>
    </citation>
    <scope>REVIEW</scope>
</reference>
<reference key="4">
    <citation type="journal article" date="2010" name="Cell">
        <title>A tissue-specific atlas of mouse protein phosphorylation and expression.</title>
        <authorList>
            <person name="Huttlin E.L."/>
            <person name="Jedrychowski M.P."/>
            <person name="Elias J.E."/>
            <person name="Goswami T."/>
            <person name="Rad R."/>
            <person name="Beausoleil S.A."/>
            <person name="Villen J."/>
            <person name="Haas W."/>
            <person name="Sowa M.E."/>
            <person name="Gygi S.P."/>
        </authorList>
    </citation>
    <scope>IDENTIFICATION BY MASS SPECTROMETRY [LARGE SCALE ANALYSIS]</scope>
    <source>
        <tissue>Brain</tissue>
    </source>
</reference>
<evidence type="ECO:0000250" key="1">
    <source>
        <dbReference type="UniProtKB" id="P63142"/>
    </source>
</evidence>
<evidence type="ECO:0000250" key="2">
    <source>
        <dbReference type="UniProtKB" id="Q63099"/>
    </source>
</evidence>
<evidence type="ECO:0000250" key="3">
    <source>
        <dbReference type="UniProtKB" id="Q92953"/>
    </source>
</evidence>
<evidence type="ECO:0000250" key="4">
    <source>
        <dbReference type="UniProtKB" id="Q95167"/>
    </source>
</evidence>
<evidence type="ECO:0000255" key="5"/>
<evidence type="ECO:0000256" key="6">
    <source>
        <dbReference type="SAM" id="MobiDB-lite"/>
    </source>
</evidence>
<evidence type="ECO:0000305" key="7"/>
<evidence type="ECO:0000305" key="8">
    <source>
    </source>
</evidence>
<evidence type="ECO:0000312" key="9">
    <source>
        <dbReference type="MGI" id="MGI:99632"/>
    </source>
</evidence>
<feature type="chain" id="PRO_0000320104" description="Potassium voltage-gated channel subfamily B member 2">
    <location>
        <begin position="1"/>
        <end position="907"/>
    </location>
</feature>
<feature type="topological domain" description="Cytoplasmic" evidence="1">
    <location>
        <begin position="1"/>
        <end position="190"/>
    </location>
</feature>
<feature type="transmembrane region" description="Helical; Name=Segment S1" evidence="1">
    <location>
        <begin position="191"/>
        <end position="212"/>
    </location>
</feature>
<feature type="topological domain" description="Extracellular" evidence="1">
    <location>
        <begin position="213"/>
        <end position="232"/>
    </location>
</feature>
<feature type="transmembrane region" description="Helical; Name=Segment S2" evidence="1">
    <location>
        <begin position="233"/>
        <end position="254"/>
    </location>
</feature>
<feature type="topological domain" description="Cytoplasmic" evidence="1">
    <location>
        <begin position="255"/>
        <end position="265"/>
    </location>
</feature>
<feature type="transmembrane region" description="Helical; Name=Segment S3" evidence="1">
    <location>
        <begin position="266"/>
        <end position="284"/>
    </location>
</feature>
<feature type="topological domain" description="Extracellular" evidence="1">
    <location>
        <begin position="285"/>
        <end position="296"/>
    </location>
</feature>
<feature type="transmembrane region" description="Helical; Voltage-sensor; Name=Segment S4" evidence="1">
    <location>
        <begin position="297"/>
        <end position="317"/>
    </location>
</feature>
<feature type="topological domain" description="Cytoplasmic" evidence="1">
    <location>
        <begin position="318"/>
        <end position="332"/>
    </location>
</feature>
<feature type="transmembrane region" description="Helical; Name=Segment S5" evidence="1">
    <location>
        <begin position="333"/>
        <end position="354"/>
    </location>
</feature>
<feature type="topological domain" description="Extracellular" evidence="1">
    <location>
        <begin position="355"/>
        <end position="368"/>
    </location>
</feature>
<feature type="intramembrane region" description="Helical; Name=Pore helix" evidence="1">
    <location>
        <begin position="369"/>
        <end position="380"/>
    </location>
</feature>
<feature type="intramembrane region" evidence="1">
    <location>
        <begin position="381"/>
        <end position="388"/>
    </location>
</feature>
<feature type="topological domain" description="Extracellular" evidence="1">
    <location>
        <begin position="389"/>
        <end position="395"/>
    </location>
</feature>
<feature type="transmembrane region" description="Helical; Name=Segment S6" evidence="1">
    <location>
        <begin position="396"/>
        <end position="424"/>
    </location>
</feature>
<feature type="topological domain" description="Cytoplasmic" evidence="1">
    <location>
        <begin position="425"/>
        <end position="907"/>
    </location>
</feature>
<feature type="region of interest" description="Disordered" evidence="6">
    <location>
        <begin position="1"/>
        <end position="22"/>
    </location>
</feature>
<feature type="region of interest" description="Disordered" evidence="6">
    <location>
        <begin position="503"/>
        <end position="534"/>
    </location>
</feature>
<feature type="region of interest" description="Disordered" evidence="6">
    <location>
        <begin position="680"/>
        <end position="742"/>
    </location>
</feature>
<feature type="region of interest" description="Disordered" evidence="6">
    <location>
        <begin position="761"/>
        <end position="859"/>
    </location>
</feature>
<feature type="region of interest" description="Disordered" evidence="6">
    <location>
        <begin position="887"/>
        <end position="907"/>
    </location>
</feature>
<feature type="short sequence motif" description="Selectivity filter" evidence="1">
    <location>
        <begin position="381"/>
        <end position="386"/>
    </location>
</feature>
<feature type="short sequence motif" description="FFAT" evidence="3">
    <location>
        <begin position="605"/>
        <end position="611"/>
    </location>
</feature>
<feature type="compositionally biased region" description="Polar residues" evidence="6">
    <location>
        <begin position="525"/>
        <end position="534"/>
    </location>
</feature>
<feature type="compositionally biased region" description="Polar residues" evidence="6">
    <location>
        <begin position="690"/>
        <end position="723"/>
    </location>
</feature>
<feature type="compositionally biased region" description="Basic and acidic residues" evidence="6">
    <location>
        <begin position="813"/>
        <end position="823"/>
    </location>
</feature>
<feature type="compositionally biased region" description="Basic and acidic residues" evidence="6">
    <location>
        <begin position="833"/>
        <end position="845"/>
    </location>
</feature>
<feature type="modified residue" description="Phosphoserine" evidence="2">
    <location>
        <position position="448"/>
    </location>
</feature>
<feature type="modified residue" description="Phosphoserine" evidence="3">
    <location>
        <position position="608"/>
    </location>
</feature>
<feature type="glycosylation site" description="N-linked (GlcNAc...) asparagine" evidence="5">
    <location>
        <position position="287"/>
    </location>
</feature>
<feature type="sequence conflict" description="In Ref. 2; AAI46610." evidence="7" ref="2">
    <original>N</original>
    <variation>K</variation>
    <location>
        <position position="518"/>
    </location>
</feature>
<accession>A6H8H5</accession>
<accession>E9Q5T7</accession>
<comment type="function">
    <text evidence="2">Voltage-gated potassium channel that mediates transmembrane potassium transport in excitable membranes, primarily in the brain and smooth muscle cells. Channels open or close in response to the voltage difference across the membrane, letting potassium ions pass in accordance with their electrochemical gradient. Homotetrameric channels mediate a delayed-rectifier voltage-dependent outward potassium current that display rapid activation and slow inactivation in response to membrane depolarization. Can form functional homotetrameric and heterotetrameric channels that contain variable proportions of KCNB1; channel properties depend on the type of alpha subunits that are part of the channel. Can also form functional heterotetrameric channels with other alpha subunits that are non-conducting when expressed alone, such as KCNS1 and KCNS2, creating a functionally diverse range of channel complexes. In vivo, membranes probably contain a mixture of heteromeric potassium channel complexes, making it difficult to assign currents observed in intact tissues to any particular potassium channel family member. Contributes to the delayed-rectifier voltage-gated potassium current in cortical pyramidal neurons and smooth muscle cells.</text>
</comment>
<comment type="catalytic activity">
    <reaction evidence="2">
        <text>K(+)(in) = K(+)(out)</text>
        <dbReference type="Rhea" id="RHEA:29463"/>
        <dbReference type="ChEBI" id="CHEBI:29103"/>
    </reaction>
</comment>
<comment type="activity regulation">
    <text evidence="2 4 8">Inhibited by quinine at micromolar levels. Modestly sensitive to millimolar levels of tetraethylammonium (TEA) and 4-aminopyridine (4-AP).</text>
</comment>
<comment type="biophysicochemical properties">
    <kinetics>
        <text evidence="8">Homotetrameric channels expressed in xenopus oocytes or in mammalian non-neuronal cells display delayed-rectifier voltage-dependent potassium currents which are activated during membrane depolarization, i.e within a risetime of about 20 msec. After that, inactivate very slowly. Their activation requires low threshold potentials of about -20 to -30 mV, with a midpoint activation at about 10 mV. For inactivation, the voltage at half-maximal amplitude is about -30 mV. Channels have an unitary conductance of about 14 pS. The voltage-dependence of activation and inactivation and other channel characteristics vary depending on the experimental conditions, the expression system and post-translational modifications.</text>
    </kinetics>
</comment>
<comment type="subunit">
    <text evidence="2 3">Homotetramer or heterotetramer with KCNB1. Heterotetramer with KCNS1 and KCNS2. Interacts (via phosphorylated FFAT motif) with VAPA and VAPB.</text>
</comment>
<comment type="subcellular location">
    <subcellularLocation>
        <location evidence="2">Cell membrane</location>
        <topology evidence="2">Multi-pass membrane protein</topology>
    </subcellularLocation>
    <subcellularLocation>
        <location evidence="2">Perikaryon</location>
    </subcellularLocation>
    <subcellularLocation>
        <location evidence="2">Cell projection</location>
        <location evidence="2">Dendrite</location>
    </subcellularLocation>
    <text evidence="2">Localized uniformly throughout cell bodies and dendrites. Colocalizes with KCNB1 to high-density somatodendritic clusters on cortical pyramidal neurons.</text>
</comment>
<comment type="domain">
    <text evidence="1">The transmembrane segment S4 functions as a voltage-sensor and is characterized by a series of positively charged amino acids at every third position. Channel opening and closing is effected by a conformation change that affects the position and orientation of the voltage-sensor paddle formed by S3 and S4 within the membrane. A transmembrane electric field that is positive inside would push the positively charged S4 segment outwards, thereby opening the pore, while a field that is negative inside would pull the S4 segment inwards and close the pore. Changes in the position and orientation of S4 are then transmitted to the activation gate formed by the inner helix bundle via the S4-S5 linker region.</text>
</comment>
<comment type="PTM">
    <text evidence="2 3">Phosphorylated (By similarity). Phosphorylation at Ser-608 of the FFAT motif activates interaction with MOSPD2, VAPA and VAPB (By similarity).</text>
</comment>
<comment type="similarity">
    <text evidence="7">Belongs to the potassium channel family. B (Shab) (TC 1.A.1.2) subfamily. Kv2.2/KCNB2 sub-subfamily.</text>
</comment>
<sequence>MAEKAPPGLNRKTSRSTLSLPPEPVDIIRSKTCSRRVKINVGGLNHEVLWRTLDRLPRTRLGKLRDCNTHESLLEVCDDYNLNENEYFFDRHPGAFTSILNFYRTGKLHMMEEMCALSFGQELDYWGIDEIYLESCCQARYHQKKEQMNEELRREAETMREREGEEFDNTCCPEKRKKLWDLLEKPNSSVAAKILAIVSILFIVLSTIALSLNTLPELQENDEFGQPSDNRKLAHVEAVCIAWFTMEYLLRFLSSPNKWKFFKGPLNVIDLLAILPYYVTIFLTESNKSVLQFQNVRRVVQIFRIMRILRILKLARHSTGLQSLGFTLRRSYNELGLLILFLAMGIMIFSSLVFFAEKDEDATKFTSIPASFWWATITMTTVGYGDIYPKTLLGKIVGGLCCIAGVLVIALPIPIIVNNFSEFYKEQKRQEKAIKRREALERAKRNGSIVSMNLKDAFARSMELIDVAVEKAGESANTKDSVDDNHLSPSRWKWARKALSETSSNKSYENKYQEVSQNDSHEHLNNTSSSSPQHLSAQKLEMLYNEITKTQPHSHPNPDCQEQPERPCVYEEEIEMEEVICPQEQLAVAQTEVIVDMKSTSSIDSFTSCATDFTETERSPLPPPSASHLQMKFPTDLPGTDEHQRARAPPFLTLSRDKGPAAREAAVDYAPIDITVNLDAGASHGPLQPDSASDSPKSSLKGSNPLKSRSLKVNFQENRASAPQTPPSTARPLPVTTADFPLTTPQHMSTILLEEALPQGQPPLLEADDSAHCQGPSKGFSPRFPKQKLFPFSSRERRSFTEIDTGEDEDFLDLQRSRPDKQADPSPNCLADKPGDARDSLREEGCVGSSSPQNTDHNCRQDIYQAVGEVKKDSSQEGYKMENHLFAPEIHSNPGDTGHCPTRETSM</sequence>
<organism>
    <name type="scientific">Mus musculus</name>
    <name type="common">Mouse</name>
    <dbReference type="NCBI Taxonomy" id="10090"/>
    <lineage>
        <taxon>Eukaryota</taxon>
        <taxon>Metazoa</taxon>
        <taxon>Chordata</taxon>
        <taxon>Craniata</taxon>
        <taxon>Vertebrata</taxon>
        <taxon>Euteleostomi</taxon>
        <taxon>Mammalia</taxon>
        <taxon>Eutheria</taxon>
        <taxon>Euarchontoglires</taxon>
        <taxon>Glires</taxon>
        <taxon>Rodentia</taxon>
        <taxon>Myomorpha</taxon>
        <taxon>Muroidea</taxon>
        <taxon>Muridae</taxon>
        <taxon>Murinae</taxon>
        <taxon>Mus</taxon>
        <taxon>Mus</taxon>
    </lineage>
</organism>